<evidence type="ECO:0000255" key="1"/>
<evidence type="ECO:0000256" key="2">
    <source>
        <dbReference type="SAM" id="MobiDB-lite"/>
    </source>
</evidence>
<evidence type="ECO:0000305" key="3"/>
<sequence>MKYRIALAVSLFALSAGSYATTLCQEKEQNILKEISYAEKHQNQNRIDGLNKALSEVRANCSDSQLRADHQKKIAKQKDEVAERQQDLAEAKQKGDADKIAKRERKLAEAQEELKKLEARDY</sequence>
<organism>
    <name type="scientific">Escherichia coli (strain K12)</name>
    <dbReference type="NCBI Taxonomy" id="83333"/>
    <lineage>
        <taxon>Bacteria</taxon>
        <taxon>Pseudomonadati</taxon>
        <taxon>Pseudomonadota</taxon>
        <taxon>Gammaproteobacteria</taxon>
        <taxon>Enterobacterales</taxon>
        <taxon>Enterobacteriaceae</taxon>
        <taxon>Escherichia</taxon>
    </lineage>
</organism>
<name>YQJC_ECOLI</name>
<keyword id="KW-1185">Reference proteome</keyword>
<keyword id="KW-0732">Signal</keyword>
<reference key="1">
    <citation type="journal article" date="1997" name="Science">
        <title>The complete genome sequence of Escherichia coli K-12.</title>
        <authorList>
            <person name="Blattner F.R."/>
            <person name="Plunkett G. III"/>
            <person name="Bloch C.A."/>
            <person name="Perna N.T."/>
            <person name="Burland V."/>
            <person name="Riley M."/>
            <person name="Collado-Vides J."/>
            <person name="Glasner J.D."/>
            <person name="Rode C.K."/>
            <person name="Mayhew G.F."/>
            <person name="Gregor J."/>
            <person name="Davis N.W."/>
            <person name="Kirkpatrick H.A."/>
            <person name="Goeden M.A."/>
            <person name="Rose D.J."/>
            <person name="Mau B."/>
            <person name="Shao Y."/>
        </authorList>
    </citation>
    <scope>NUCLEOTIDE SEQUENCE [LARGE SCALE GENOMIC DNA]</scope>
    <source>
        <strain>K12 / MG1655 / ATCC 47076</strain>
    </source>
</reference>
<reference key="2">
    <citation type="journal article" date="2006" name="Mol. Syst. Biol.">
        <title>Highly accurate genome sequences of Escherichia coli K-12 strains MG1655 and W3110.</title>
        <authorList>
            <person name="Hayashi K."/>
            <person name="Morooka N."/>
            <person name="Yamamoto Y."/>
            <person name="Fujita K."/>
            <person name="Isono K."/>
            <person name="Choi S."/>
            <person name="Ohtsubo E."/>
            <person name="Baba T."/>
            <person name="Wanner B.L."/>
            <person name="Mori H."/>
            <person name="Horiuchi T."/>
        </authorList>
    </citation>
    <scope>NUCLEOTIDE SEQUENCE [LARGE SCALE GENOMIC DNA]</scope>
    <source>
        <strain>K12 / W3110 / ATCC 27325 / DSM 5911</strain>
    </source>
</reference>
<reference key="3">
    <citation type="journal article" date="1999" name="Electrophoresis">
        <title>Enrichment of low abundance proteins of Escherichia coli by hydroxyapatite chromatography.</title>
        <authorList>
            <person name="Fountoulakis M."/>
            <person name="Takacs M.-F."/>
            <person name="Berndt P."/>
            <person name="Langen H."/>
            <person name="Takacs B."/>
        </authorList>
    </citation>
    <scope>IDENTIFICATION BY MASS SPECTROMETRY</scope>
    <source>
        <strain>B / BL21</strain>
    </source>
</reference>
<feature type="signal peptide" evidence="1">
    <location>
        <begin position="1"/>
        <end position="20"/>
    </location>
</feature>
<feature type="chain" id="PRO_0000013907" description="Protein YqjC">
    <location>
        <begin position="21"/>
        <end position="122"/>
    </location>
</feature>
<feature type="region of interest" description="Disordered" evidence="2">
    <location>
        <begin position="65"/>
        <end position="100"/>
    </location>
</feature>
<feature type="compositionally biased region" description="Basic and acidic residues" evidence="2">
    <location>
        <begin position="66"/>
        <end position="100"/>
    </location>
</feature>
<feature type="sequence conflict" description="In Ref. 1; AAA57901." evidence="3" ref="1">
    <original>KQ</original>
    <variation>NE</variation>
    <location>
        <begin position="92"/>
        <end position="93"/>
    </location>
</feature>
<comment type="sequence caution" evidence="3">
    <conflict type="erroneous initiation">
        <sequence resource="EMBL-CDS" id="AAA57901"/>
    </conflict>
    <text>Extended N-terminus.</text>
</comment>
<gene>
    <name type="primary">yqjC</name>
    <name type="ordered locus">b3097</name>
    <name type="ordered locus">JW5516</name>
</gene>
<proteinExistence type="evidence at protein level"/>
<dbReference type="EMBL" id="U18997">
    <property type="protein sequence ID" value="AAA57901.1"/>
    <property type="status" value="ALT_INIT"/>
    <property type="molecule type" value="Genomic_DNA"/>
</dbReference>
<dbReference type="EMBL" id="U00096">
    <property type="protein sequence ID" value="AAC76132.2"/>
    <property type="molecule type" value="Genomic_DNA"/>
</dbReference>
<dbReference type="EMBL" id="AP009048">
    <property type="protein sequence ID" value="BAE77147.1"/>
    <property type="molecule type" value="Genomic_DNA"/>
</dbReference>
<dbReference type="RefSeq" id="NP_417568.2">
    <property type="nucleotide sequence ID" value="NC_000913.3"/>
</dbReference>
<dbReference type="RefSeq" id="WP_001295543.1">
    <property type="nucleotide sequence ID" value="NZ_LN832404.1"/>
</dbReference>
<dbReference type="SMR" id="P42616"/>
<dbReference type="BioGRID" id="4262024">
    <property type="interactions" value="19"/>
</dbReference>
<dbReference type="FunCoup" id="P42616">
    <property type="interactions" value="31"/>
</dbReference>
<dbReference type="STRING" id="511145.b3097"/>
<dbReference type="jPOST" id="P42616"/>
<dbReference type="PaxDb" id="511145-b3097"/>
<dbReference type="EnsemblBacteria" id="AAC76132">
    <property type="protein sequence ID" value="AAC76132"/>
    <property type="gene ID" value="b3097"/>
</dbReference>
<dbReference type="GeneID" id="75173271"/>
<dbReference type="GeneID" id="947622"/>
<dbReference type="KEGG" id="ecj:JW5516"/>
<dbReference type="KEGG" id="eco:b3097"/>
<dbReference type="KEGG" id="ecoc:C3026_16910"/>
<dbReference type="PATRIC" id="fig|511145.12.peg.3193"/>
<dbReference type="EchoBASE" id="EB2598"/>
<dbReference type="eggNOG" id="COG1422">
    <property type="taxonomic scope" value="Bacteria"/>
</dbReference>
<dbReference type="HOGENOM" id="CLU_139075_0_0_6"/>
<dbReference type="InParanoid" id="P42616"/>
<dbReference type="OMA" id="IRANCRD"/>
<dbReference type="OrthoDB" id="8689941at2"/>
<dbReference type="PhylomeDB" id="P42616"/>
<dbReference type="BioCyc" id="EcoCyc:G7611-MONOMER"/>
<dbReference type="PRO" id="PR:P42616"/>
<dbReference type="Proteomes" id="UP000000625">
    <property type="component" value="Chromosome"/>
</dbReference>
<dbReference type="InterPro" id="IPR009468">
    <property type="entry name" value="DUF1090"/>
</dbReference>
<dbReference type="Pfam" id="PF06476">
    <property type="entry name" value="DUF1090"/>
    <property type="match status" value="1"/>
</dbReference>
<accession>P42616</accession>
<accession>Q2M9A9</accession>
<protein>
    <recommendedName>
        <fullName>Protein YqjC</fullName>
    </recommendedName>
</protein>